<proteinExistence type="inferred from homology"/>
<accession>P82636</accession>
<sequence length="98" mass="10853">MRYTTSFIGLCFLIFLLKNLVNGGLIRECDYTMEGYGPCGPNGRSLCLDTFWKTPPSPGLSKNLEGCRCEDRGKRPPIFTGLSHTCRCCWSYGGGSDD</sequence>
<comment type="subcellular location">
    <subcellularLocation>
        <location evidence="1">Secreted</location>
    </subcellularLocation>
</comment>
<comment type="similarity">
    <text evidence="3">Belongs to the DEFL family.</text>
</comment>
<organism evidence="3">
    <name type="scientific">Arabidopsis thaliana</name>
    <name type="common">Mouse-ear cress</name>
    <dbReference type="NCBI Taxonomy" id="3702"/>
    <lineage>
        <taxon>Eukaryota</taxon>
        <taxon>Viridiplantae</taxon>
        <taxon>Streptophyta</taxon>
        <taxon>Embryophyta</taxon>
        <taxon>Tracheophyta</taxon>
        <taxon>Spermatophyta</taxon>
        <taxon>Magnoliopsida</taxon>
        <taxon>eudicotyledons</taxon>
        <taxon>Gunneridae</taxon>
        <taxon>Pentapetalae</taxon>
        <taxon>rosids</taxon>
        <taxon>malvids</taxon>
        <taxon>Brassicales</taxon>
        <taxon>Brassicaceae</taxon>
        <taxon>Camelineae</taxon>
        <taxon>Arabidopsis</taxon>
    </lineage>
</organism>
<evidence type="ECO:0000250" key="1"/>
<evidence type="ECO:0000255" key="2"/>
<evidence type="ECO:0000305" key="3"/>
<gene>
    <name type="primary">SCRL17</name>
    <name type="ordered locus">At2g25685</name>
    <name type="ORF">F3N11</name>
</gene>
<name>DF239_ARATH</name>
<dbReference type="EMBL" id="AC006053">
    <property type="status" value="NOT_ANNOTATED_CDS"/>
    <property type="molecule type" value="Genomic_DNA"/>
</dbReference>
<dbReference type="EMBL" id="CP002685">
    <property type="protein sequence ID" value="AEC07735.1"/>
    <property type="molecule type" value="Genomic_DNA"/>
</dbReference>
<dbReference type="RefSeq" id="NP_001031414.1">
    <property type="nucleotide sequence ID" value="NM_001036337.2"/>
</dbReference>
<dbReference type="PaxDb" id="3702-AT2G25685.1"/>
<dbReference type="EnsemblPlants" id="AT2G25685.1">
    <property type="protein sequence ID" value="AT2G25685.1"/>
    <property type="gene ID" value="AT2G25685"/>
</dbReference>
<dbReference type="GeneID" id="3768144"/>
<dbReference type="Gramene" id="AT2G25685.1">
    <property type="protein sequence ID" value="AT2G25685.1"/>
    <property type="gene ID" value="AT2G25685"/>
</dbReference>
<dbReference type="KEGG" id="ath:AT2G25685"/>
<dbReference type="Araport" id="AT2G25685"/>
<dbReference type="TAIR" id="AT2G25685">
    <property type="gene designation" value="SCRL17"/>
</dbReference>
<dbReference type="HOGENOM" id="CLU_2349619_0_0_1"/>
<dbReference type="InParanoid" id="P82636"/>
<dbReference type="PhylomeDB" id="P82636"/>
<dbReference type="PRO" id="PR:P82636"/>
<dbReference type="Proteomes" id="UP000006548">
    <property type="component" value="Chromosome 2"/>
</dbReference>
<dbReference type="ExpressionAtlas" id="P82636">
    <property type="expression patterns" value="baseline and differential"/>
</dbReference>
<dbReference type="GO" id="GO:0005576">
    <property type="term" value="C:extracellular region"/>
    <property type="evidence" value="ECO:0007669"/>
    <property type="project" value="UniProtKB-SubCell"/>
</dbReference>
<dbReference type="GO" id="GO:0050832">
    <property type="term" value="P:defense response to fungus"/>
    <property type="evidence" value="ECO:0007669"/>
    <property type="project" value="UniProtKB-KW"/>
</dbReference>
<dbReference type="GO" id="GO:0031640">
    <property type="term" value="P:killing of cells of another organism"/>
    <property type="evidence" value="ECO:0007669"/>
    <property type="project" value="UniProtKB-KW"/>
</dbReference>
<dbReference type="GO" id="GO:0007165">
    <property type="term" value="P:signal transduction"/>
    <property type="evidence" value="ECO:0007669"/>
    <property type="project" value="InterPro"/>
</dbReference>
<dbReference type="InterPro" id="IPR010682">
    <property type="entry name" value="SCRL"/>
</dbReference>
<dbReference type="PANTHER" id="PTHR34450:SF6">
    <property type="entry name" value="DEFENSIN-LIKE PROTEIN 241-RELATED"/>
    <property type="match status" value="1"/>
</dbReference>
<dbReference type="PANTHER" id="PTHR34450">
    <property type="entry name" value="DEFENSIN-LIKE PROTEIN 245-RELATED"/>
    <property type="match status" value="1"/>
</dbReference>
<protein>
    <recommendedName>
        <fullName>Putative defensin-like protein 239</fullName>
    </recommendedName>
    <alternativeName>
        <fullName>Putative S locus cysteine-rich-like protein 17</fullName>
        <shortName>Protein SCRL17</shortName>
        <shortName>SCR-like protein 17</shortName>
    </alternativeName>
</protein>
<keyword id="KW-0929">Antimicrobial</keyword>
<keyword id="KW-1015">Disulfide bond</keyword>
<keyword id="KW-0295">Fungicide</keyword>
<keyword id="KW-0611">Plant defense</keyword>
<keyword id="KW-1185">Reference proteome</keyword>
<keyword id="KW-0964">Secreted</keyword>
<keyword id="KW-0732">Signal</keyword>
<feature type="signal peptide" evidence="2">
    <location>
        <begin position="1"/>
        <end position="23"/>
    </location>
</feature>
<feature type="chain" id="PRO_0000031943" description="Putative defensin-like protein 239">
    <location>
        <begin position="24"/>
        <end position="98"/>
    </location>
</feature>
<feature type="disulfide bond" evidence="1">
    <location>
        <begin position="29"/>
        <end position="89"/>
    </location>
</feature>
<feature type="disulfide bond" evidence="1">
    <location>
        <begin position="39"/>
        <end position="69"/>
    </location>
</feature>
<feature type="disulfide bond" evidence="1">
    <location>
        <begin position="47"/>
        <end position="86"/>
    </location>
</feature>
<feature type="disulfide bond" evidence="1">
    <location>
        <begin position="67"/>
        <end position="88"/>
    </location>
</feature>
<reference evidence="3" key="1">
    <citation type="journal article" date="1999" name="Nature">
        <title>Sequence and analysis of chromosome 2 of the plant Arabidopsis thaliana.</title>
        <authorList>
            <person name="Lin X."/>
            <person name="Kaul S."/>
            <person name="Rounsley S.D."/>
            <person name="Shea T.P."/>
            <person name="Benito M.-I."/>
            <person name="Town C.D."/>
            <person name="Fujii C.Y."/>
            <person name="Mason T.M."/>
            <person name="Bowman C.L."/>
            <person name="Barnstead M.E."/>
            <person name="Feldblyum T.V."/>
            <person name="Buell C.R."/>
            <person name="Ketchum K.A."/>
            <person name="Lee J.J."/>
            <person name="Ronning C.M."/>
            <person name="Koo H.L."/>
            <person name="Moffat K.S."/>
            <person name="Cronin L.A."/>
            <person name="Shen M."/>
            <person name="Pai G."/>
            <person name="Van Aken S."/>
            <person name="Umayam L."/>
            <person name="Tallon L.J."/>
            <person name="Gill J.E."/>
            <person name="Adams M.D."/>
            <person name="Carrera A.J."/>
            <person name="Creasy T.H."/>
            <person name="Goodman H.M."/>
            <person name="Somerville C.R."/>
            <person name="Copenhaver G.P."/>
            <person name="Preuss D."/>
            <person name="Nierman W.C."/>
            <person name="White O."/>
            <person name="Eisen J.A."/>
            <person name="Salzberg S.L."/>
            <person name="Fraser C.M."/>
            <person name="Venter J.C."/>
        </authorList>
    </citation>
    <scope>NUCLEOTIDE SEQUENCE [LARGE SCALE GENOMIC DNA]</scope>
    <source>
        <strain>cv. Columbia</strain>
    </source>
</reference>
<reference key="2">
    <citation type="journal article" date="2017" name="Plant J.">
        <title>Araport11: a complete reannotation of the Arabidopsis thaliana reference genome.</title>
        <authorList>
            <person name="Cheng C.Y."/>
            <person name="Krishnakumar V."/>
            <person name="Chan A.P."/>
            <person name="Thibaud-Nissen F."/>
            <person name="Schobel S."/>
            <person name="Town C.D."/>
        </authorList>
    </citation>
    <scope>GENOME REANNOTATION</scope>
    <source>
        <strain>cv. Columbia</strain>
    </source>
</reference>
<reference evidence="3" key="3">
    <citation type="journal article" date="2001" name="Plant Mol. Biol.">
        <title>Two large Arabidopsis thaliana gene families are homologous to the Brassica gene superfamily that encodes pollen coat proteins and the male component of the self-incompatibility response.</title>
        <authorList>
            <person name="Vanoosthuyse V."/>
            <person name="Miege C."/>
            <person name="Dumas C."/>
            <person name="Cock J.M."/>
        </authorList>
    </citation>
    <scope>IDENTIFICATION</scope>
</reference>
<reference key="4">
    <citation type="journal article" date="2005" name="Plant Physiol.">
        <title>Genome organization of more than 300 defensin-like genes in Arabidopsis.</title>
        <authorList>
            <person name="Silverstein K.A.T."/>
            <person name="Graham M.A."/>
            <person name="Paape T.D."/>
            <person name="VandenBosch K.A."/>
        </authorList>
    </citation>
    <scope>GENE FAMILY</scope>
</reference>